<feature type="signal peptide" evidence="3">
    <location>
        <begin position="1"/>
        <end position="18"/>
    </location>
</feature>
<feature type="chain" id="PRO_0000252456" description="Carboxypeptidase Z" evidence="1">
    <location>
        <begin position="19"/>
        <end position="652"/>
    </location>
</feature>
<feature type="domain" description="FZ" evidence="4">
    <location>
        <begin position="27"/>
        <end position="160"/>
    </location>
</feature>
<feature type="domain" description="Peptidase M14" evidence="5">
    <location>
        <begin position="186"/>
        <end position="502"/>
    </location>
</feature>
<feature type="region of interest" description="Disordered" evidence="6">
    <location>
        <begin position="595"/>
        <end position="629"/>
    </location>
</feature>
<feature type="active site" description="Proton donor/acceptor" evidence="5">
    <location>
        <position position="472"/>
    </location>
</feature>
<feature type="binding site" evidence="5">
    <location>
        <position position="248"/>
    </location>
    <ligand>
        <name>Zn(2+)</name>
        <dbReference type="ChEBI" id="CHEBI:29105"/>
        <note>catalytic</note>
    </ligand>
</feature>
<feature type="binding site" evidence="5">
    <location>
        <position position="251"/>
    </location>
    <ligand>
        <name>Zn(2+)</name>
        <dbReference type="ChEBI" id="CHEBI:29105"/>
        <note>catalytic</note>
    </ligand>
</feature>
<feature type="binding site" evidence="5">
    <location>
        <position position="380"/>
    </location>
    <ligand>
        <name>Zn(2+)</name>
        <dbReference type="ChEBI" id="CHEBI:29105"/>
        <note>catalytic</note>
    </ligand>
</feature>
<feature type="glycosylation site" description="N-linked (GlcNAc...) asparagine" evidence="3">
    <location>
        <position position="281"/>
    </location>
</feature>
<feature type="disulfide bond" evidence="4">
    <location>
        <begin position="43"/>
        <end position="109"/>
    </location>
</feature>
<feature type="disulfide bond" evidence="4">
    <location>
        <begin position="51"/>
        <end position="102"/>
    </location>
</feature>
<feature type="disulfide bond" evidence="4">
    <location>
        <begin position="93"/>
        <end position="129"/>
    </location>
</feature>
<feature type="disulfide bond" evidence="4">
    <location>
        <begin position="118"/>
        <end position="157"/>
    </location>
</feature>
<feature type="disulfide bond" evidence="4">
    <location>
        <begin position="122"/>
        <end position="146"/>
    </location>
</feature>
<feature type="splice variant" id="VSP_040356" description="In isoform 3." evidence="13">
    <location>
        <begin position="1"/>
        <end position="137"/>
    </location>
</feature>
<feature type="splice variant" id="VSP_020983" description="In isoform 2." evidence="14">
    <location>
        <begin position="30"/>
        <end position="40"/>
    </location>
</feature>
<feature type="sequence variant" id="VAR_027883" description="In dbSNP:rs2302583." evidence="11 12">
    <original>L</original>
    <variation>P</variation>
    <location>
        <position position="5"/>
    </location>
</feature>
<feature type="sequence variant" id="VAR_047244" description="In dbSNP:rs34964084." evidence="12">
    <original>P</original>
    <variation>L</variation>
    <location>
        <position position="6"/>
    </location>
</feature>
<feature type="sequence variant" id="VAR_047245" description="In dbSNP:rs35993494.">
    <original>Q</original>
    <variation>L</variation>
    <location>
        <position position="130"/>
    </location>
</feature>
<feature type="sequence variant" id="VAR_047246" description="In dbSNP:rs7378066." evidence="11 12">
    <original>I</original>
    <variation>T</variation>
    <location>
        <position position="486"/>
    </location>
</feature>
<feature type="sequence variant" id="VAR_027884" description="In dbSNP:rs9991535.">
    <original>T</original>
    <variation>M</variation>
    <location>
        <position position="501"/>
    </location>
</feature>
<feature type="sequence conflict" description="In Ref. 4; BC006393." evidence="15" ref="4">
    <original>T</original>
    <variation>M</variation>
    <location>
        <position position="200"/>
    </location>
</feature>
<feature type="sequence conflict" description="In Ref. 1; AAB58911." evidence="15" ref="1">
    <original>M</original>
    <variation>I</variation>
    <location>
        <position position="291"/>
    </location>
</feature>
<feature type="sequence conflict" description="In Ref. 2; BAB71147." evidence="15" ref="2">
    <original>I</original>
    <variation>T</variation>
    <location>
        <position position="523"/>
    </location>
</feature>
<organism>
    <name type="scientific">Homo sapiens</name>
    <name type="common">Human</name>
    <dbReference type="NCBI Taxonomy" id="9606"/>
    <lineage>
        <taxon>Eukaryota</taxon>
        <taxon>Metazoa</taxon>
        <taxon>Chordata</taxon>
        <taxon>Craniata</taxon>
        <taxon>Vertebrata</taxon>
        <taxon>Euteleostomi</taxon>
        <taxon>Mammalia</taxon>
        <taxon>Eutheria</taxon>
        <taxon>Euarchontoglires</taxon>
        <taxon>Primates</taxon>
        <taxon>Haplorrhini</taxon>
        <taxon>Catarrhini</taxon>
        <taxon>Hominidae</taxon>
        <taxon>Homo</taxon>
    </lineage>
</organism>
<comment type="function">
    <text evidence="9 10 12">Cleaves substrates with C-terminal arginine residues. Probably modulates the Wnt signaling pathway, by cleaving some undefined protein. May play a role in cleavage during prohormone processing.</text>
</comment>
<comment type="cofactor">
    <cofactor evidence="2">
        <name>Zn(2+)</name>
        <dbReference type="ChEBI" id="CHEBI:29105"/>
    </cofactor>
</comment>
<comment type="activity regulation">
    <text evidence="12">Inhibited by 2-mercaptomethyl-3-guanidinoethylthiopropanoic acid (MGTA) and guanidinoethylmercaptosuccinic acid (GEMSA). Inhibited by chelating agents such as EDTA and EGTA.</text>
</comment>
<comment type="biophysicochemical properties">
    <kinetics>
        <KM evidence="7 12">2 mM for dansyl-Phe-Ala-Arg</KM>
        <KM evidence="7 12">2 mM for dansyl-Pro-Ala-Arg</KM>
    </kinetics>
    <phDependence>
        <text evidence="7 12">Optimum pH is 7.8.</text>
    </phDependence>
</comment>
<comment type="subcellular location">
    <subcellularLocation>
        <location evidence="8">Secreted</location>
        <location evidence="8">Extracellular space</location>
        <location evidence="8">Extracellular matrix</location>
    </subcellularLocation>
</comment>
<comment type="alternative products">
    <event type="alternative splicing"/>
    <isoform>
        <id>Q66K79-1</id>
        <name>1</name>
        <sequence type="displayed"/>
    </isoform>
    <isoform>
        <id>Q66K79-2</id>
        <name>2</name>
        <sequence type="described" ref="VSP_020983"/>
    </isoform>
    <isoform>
        <id>Q66K79-3</id>
        <name>3</name>
        <sequence type="described" ref="VSP_040356"/>
    </isoform>
</comment>
<comment type="tissue specificity">
    <text evidence="8 10 12">In placenta, it is present within invasive trophoblasts and in the surrounding extracellular space. Also present in amnion cells, but is not readily apparent in the extracellular matrix of this cell type. Present in normal pituitary gland and neoplastic pituitary gland (especially POMC-, GH- and PRL-producing adenomas) (at protein level). Widely expressed.</text>
</comment>
<comment type="similarity">
    <text evidence="15">Belongs to the peptidase M14 family.</text>
</comment>
<comment type="sequence caution" evidence="15">
    <conflict type="frameshift">
        <sequence resource="EMBL-CDS" id="BAB71147"/>
    </conflict>
</comment>
<name>CBPZ_HUMAN</name>
<reference key="1">
    <citation type="journal article" date="1997" name="J. Biol. Chem.">
        <title>Cloning and expression of human carboxypeptidase Z, a novel metallocarboxypeptidase.</title>
        <authorList>
            <person name="Song L."/>
            <person name="Fricker L.D."/>
        </authorList>
    </citation>
    <scope>NUCLEOTIDE SEQUENCE [MRNA] (ISOFORM 2)</scope>
    <scope>FUNCTION</scope>
    <scope>ENZYME ACTIVITY</scope>
    <scope>BIOPHYSICOCHEMICAL PROPERTIES</scope>
    <scope>ACTIVITY REGULATION</scope>
    <scope>TISSUE SPECIFICITY</scope>
    <scope>VARIANTS PRO-5; LEU-6 AND THR-486</scope>
</reference>
<reference key="2">
    <citation type="journal article" date="2004" name="Nat. Genet.">
        <title>Complete sequencing and characterization of 21,243 full-length human cDNAs.</title>
        <authorList>
            <person name="Ota T."/>
            <person name="Suzuki Y."/>
            <person name="Nishikawa T."/>
            <person name="Otsuki T."/>
            <person name="Sugiyama T."/>
            <person name="Irie R."/>
            <person name="Wakamatsu A."/>
            <person name="Hayashi K."/>
            <person name="Sato H."/>
            <person name="Nagai K."/>
            <person name="Kimura K."/>
            <person name="Makita H."/>
            <person name="Sekine M."/>
            <person name="Obayashi M."/>
            <person name="Nishi T."/>
            <person name="Shibahara T."/>
            <person name="Tanaka T."/>
            <person name="Ishii S."/>
            <person name="Yamamoto J."/>
            <person name="Saito K."/>
            <person name="Kawai Y."/>
            <person name="Isono Y."/>
            <person name="Nakamura Y."/>
            <person name="Nagahari K."/>
            <person name="Murakami K."/>
            <person name="Yasuda T."/>
            <person name="Iwayanagi T."/>
            <person name="Wagatsuma M."/>
            <person name="Shiratori A."/>
            <person name="Sudo H."/>
            <person name="Hosoiri T."/>
            <person name="Kaku Y."/>
            <person name="Kodaira H."/>
            <person name="Kondo H."/>
            <person name="Sugawara M."/>
            <person name="Takahashi M."/>
            <person name="Kanda K."/>
            <person name="Yokoi T."/>
            <person name="Furuya T."/>
            <person name="Kikkawa E."/>
            <person name="Omura Y."/>
            <person name="Abe K."/>
            <person name="Kamihara K."/>
            <person name="Katsuta N."/>
            <person name="Sato K."/>
            <person name="Tanikawa M."/>
            <person name="Yamazaki M."/>
            <person name="Ninomiya K."/>
            <person name="Ishibashi T."/>
            <person name="Yamashita H."/>
            <person name="Murakawa K."/>
            <person name="Fujimori K."/>
            <person name="Tanai H."/>
            <person name="Kimata M."/>
            <person name="Watanabe M."/>
            <person name="Hiraoka S."/>
            <person name="Chiba Y."/>
            <person name="Ishida S."/>
            <person name="Ono Y."/>
            <person name="Takiguchi S."/>
            <person name="Watanabe S."/>
            <person name="Yosida M."/>
            <person name="Hotuta T."/>
            <person name="Kusano J."/>
            <person name="Kanehori K."/>
            <person name="Takahashi-Fujii A."/>
            <person name="Hara H."/>
            <person name="Tanase T.-O."/>
            <person name="Nomura Y."/>
            <person name="Togiya S."/>
            <person name="Komai F."/>
            <person name="Hara R."/>
            <person name="Takeuchi K."/>
            <person name="Arita M."/>
            <person name="Imose N."/>
            <person name="Musashino K."/>
            <person name="Yuuki H."/>
            <person name="Oshima A."/>
            <person name="Sasaki N."/>
            <person name="Aotsuka S."/>
            <person name="Yoshikawa Y."/>
            <person name="Matsunawa H."/>
            <person name="Ichihara T."/>
            <person name="Shiohata N."/>
            <person name="Sano S."/>
            <person name="Moriya S."/>
            <person name="Momiyama H."/>
            <person name="Satoh N."/>
            <person name="Takami S."/>
            <person name="Terashima Y."/>
            <person name="Suzuki O."/>
            <person name="Nakagawa S."/>
            <person name="Senoh A."/>
            <person name="Mizoguchi H."/>
            <person name="Goto Y."/>
            <person name="Shimizu F."/>
            <person name="Wakebe H."/>
            <person name="Hishigaki H."/>
            <person name="Watanabe T."/>
            <person name="Sugiyama A."/>
            <person name="Takemoto M."/>
            <person name="Kawakami B."/>
            <person name="Yamazaki M."/>
            <person name="Watanabe K."/>
            <person name="Kumagai A."/>
            <person name="Itakura S."/>
            <person name="Fukuzumi Y."/>
            <person name="Fujimori Y."/>
            <person name="Komiyama M."/>
            <person name="Tashiro H."/>
            <person name="Tanigami A."/>
            <person name="Fujiwara T."/>
            <person name="Ono T."/>
            <person name="Yamada K."/>
            <person name="Fujii Y."/>
            <person name="Ozaki K."/>
            <person name="Hirao M."/>
            <person name="Ohmori Y."/>
            <person name="Kawabata A."/>
            <person name="Hikiji T."/>
            <person name="Kobatake N."/>
            <person name="Inagaki H."/>
            <person name="Ikema Y."/>
            <person name="Okamoto S."/>
            <person name="Okitani R."/>
            <person name="Kawakami T."/>
            <person name="Noguchi S."/>
            <person name="Itoh T."/>
            <person name="Shigeta K."/>
            <person name="Senba T."/>
            <person name="Matsumura K."/>
            <person name="Nakajima Y."/>
            <person name="Mizuno T."/>
            <person name="Morinaga M."/>
            <person name="Sasaki M."/>
            <person name="Togashi T."/>
            <person name="Oyama M."/>
            <person name="Hata H."/>
            <person name="Watanabe M."/>
            <person name="Komatsu T."/>
            <person name="Mizushima-Sugano J."/>
            <person name="Satoh T."/>
            <person name="Shirai Y."/>
            <person name="Takahashi Y."/>
            <person name="Nakagawa K."/>
            <person name="Okumura K."/>
            <person name="Nagase T."/>
            <person name="Nomura N."/>
            <person name="Kikuchi H."/>
            <person name="Masuho Y."/>
            <person name="Yamashita R."/>
            <person name="Nakai K."/>
            <person name="Yada T."/>
            <person name="Nakamura Y."/>
            <person name="Ohara O."/>
            <person name="Isogai T."/>
            <person name="Sugano S."/>
        </authorList>
    </citation>
    <scope>NUCLEOTIDE SEQUENCE [LARGE SCALE MRNA] (ISOFORM 1)</scope>
    <source>
        <tissue>Teratocarcinoma</tissue>
    </source>
</reference>
<reference key="3">
    <citation type="journal article" date="2005" name="Nature">
        <title>Generation and annotation of the DNA sequences of human chromosomes 2 and 4.</title>
        <authorList>
            <person name="Hillier L.W."/>
            <person name="Graves T.A."/>
            <person name="Fulton R.S."/>
            <person name="Fulton L.A."/>
            <person name="Pepin K.H."/>
            <person name="Minx P."/>
            <person name="Wagner-McPherson C."/>
            <person name="Layman D."/>
            <person name="Wylie K."/>
            <person name="Sekhon M."/>
            <person name="Becker M.C."/>
            <person name="Fewell G.A."/>
            <person name="Delehaunty K.D."/>
            <person name="Miner T.L."/>
            <person name="Nash W.E."/>
            <person name="Kremitzki C."/>
            <person name="Oddy L."/>
            <person name="Du H."/>
            <person name="Sun H."/>
            <person name="Bradshaw-Cordum H."/>
            <person name="Ali J."/>
            <person name="Carter J."/>
            <person name="Cordes M."/>
            <person name="Harris A."/>
            <person name="Isak A."/>
            <person name="van Brunt A."/>
            <person name="Nguyen C."/>
            <person name="Du F."/>
            <person name="Courtney L."/>
            <person name="Kalicki J."/>
            <person name="Ozersky P."/>
            <person name="Abbott S."/>
            <person name="Armstrong J."/>
            <person name="Belter E.A."/>
            <person name="Caruso L."/>
            <person name="Cedroni M."/>
            <person name="Cotton M."/>
            <person name="Davidson T."/>
            <person name="Desai A."/>
            <person name="Elliott G."/>
            <person name="Erb T."/>
            <person name="Fronick C."/>
            <person name="Gaige T."/>
            <person name="Haakenson W."/>
            <person name="Haglund K."/>
            <person name="Holmes A."/>
            <person name="Harkins R."/>
            <person name="Kim K."/>
            <person name="Kruchowski S.S."/>
            <person name="Strong C.M."/>
            <person name="Grewal N."/>
            <person name="Goyea E."/>
            <person name="Hou S."/>
            <person name="Levy A."/>
            <person name="Martinka S."/>
            <person name="Mead K."/>
            <person name="McLellan M.D."/>
            <person name="Meyer R."/>
            <person name="Randall-Maher J."/>
            <person name="Tomlinson C."/>
            <person name="Dauphin-Kohlberg S."/>
            <person name="Kozlowicz-Reilly A."/>
            <person name="Shah N."/>
            <person name="Swearengen-Shahid S."/>
            <person name="Snider J."/>
            <person name="Strong J.T."/>
            <person name="Thompson J."/>
            <person name="Yoakum M."/>
            <person name="Leonard S."/>
            <person name="Pearman C."/>
            <person name="Trani L."/>
            <person name="Radionenko M."/>
            <person name="Waligorski J.E."/>
            <person name="Wang C."/>
            <person name="Rock S.M."/>
            <person name="Tin-Wollam A.-M."/>
            <person name="Maupin R."/>
            <person name="Latreille P."/>
            <person name="Wendl M.C."/>
            <person name="Yang S.-P."/>
            <person name="Pohl C."/>
            <person name="Wallis J.W."/>
            <person name="Spieth J."/>
            <person name="Bieri T.A."/>
            <person name="Berkowicz N."/>
            <person name="Nelson J.O."/>
            <person name="Osborne J."/>
            <person name="Ding L."/>
            <person name="Meyer R."/>
            <person name="Sabo A."/>
            <person name="Shotland Y."/>
            <person name="Sinha P."/>
            <person name="Wohldmann P.E."/>
            <person name="Cook L.L."/>
            <person name="Hickenbotham M.T."/>
            <person name="Eldred J."/>
            <person name="Williams D."/>
            <person name="Jones T.A."/>
            <person name="She X."/>
            <person name="Ciccarelli F.D."/>
            <person name="Izaurralde E."/>
            <person name="Taylor J."/>
            <person name="Schmutz J."/>
            <person name="Myers R.M."/>
            <person name="Cox D.R."/>
            <person name="Huang X."/>
            <person name="McPherson J.D."/>
            <person name="Mardis E.R."/>
            <person name="Clifton S.W."/>
            <person name="Warren W.C."/>
            <person name="Chinwalla A.T."/>
            <person name="Eddy S.R."/>
            <person name="Marra M.A."/>
            <person name="Ovcharenko I."/>
            <person name="Furey T.S."/>
            <person name="Miller W."/>
            <person name="Eichler E.E."/>
            <person name="Bork P."/>
            <person name="Suyama M."/>
            <person name="Torrents D."/>
            <person name="Waterston R.H."/>
            <person name="Wilson R.K."/>
        </authorList>
    </citation>
    <scope>NUCLEOTIDE SEQUENCE [LARGE SCALE GENOMIC DNA]</scope>
</reference>
<reference key="4">
    <citation type="journal article" date="2004" name="Genome Res.">
        <title>The status, quality, and expansion of the NIH full-length cDNA project: the Mammalian Gene Collection (MGC).</title>
        <authorList>
            <consortium name="The MGC Project Team"/>
        </authorList>
    </citation>
    <scope>NUCLEOTIDE SEQUENCE [LARGE SCALE MRNA] (ISOFORMS 1 AND 3)</scope>
    <scope>VARIANTS PRO-5 AND THR-486</scope>
    <source>
        <tissue>Muscle</tissue>
    </source>
</reference>
<reference key="5">
    <citation type="journal article" date="1999" name="Biochem. Biophys. Res. Commun.">
        <title>Purification and characterization of human metallocarboxypeptidase Z.</title>
        <authorList>
            <person name="Novikova E.G."/>
            <person name="Fricker L.D."/>
        </authorList>
    </citation>
    <scope>ENZYME ACTIVITY</scope>
    <scope>BIOPHYSICOCHEMICAL PROPERTIES</scope>
</reference>
<reference key="6">
    <citation type="journal article" date="2000" name="J. Biol. Chem.">
        <title>Carboxypeptidase Z is present in the regulated secretory pathway and extracellular matrix in cultured cells and in human tissues.</title>
        <authorList>
            <person name="Novikova E.G."/>
            <person name="Reznik S.E."/>
            <person name="Varlamov O."/>
            <person name="Fricker L.D."/>
        </authorList>
    </citation>
    <scope>SUBCELLULAR LOCATION</scope>
    <scope>TISSUE SPECIFICITY</scope>
</reference>
<reference key="7">
    <citation type="journal article" date="2001" name="Cell. Mol. Life Sci.">
        <title>Carboxypeptidases from A to Z: implications in embryonic development and Wnt binding.</title>
        <authorList>
            <person name="Reznik S.E."/>
            <person name="Fricker L.D."/>
        </authorList>
    </citation>
    <scope>FUNCTION</scope>
</reference>
<reference key="8">
    <citation type="journal article" date="2002" name="J. Histochem. Cytochem.">
        <title>Immunohistochemical localization of carboxypeptidases D, E, and Z in pituitary adenomas and normal human pituitary.</title>
        <authorList>
            <person name="Fan X."/>
            <person name="Olson S.J."/>
            <person name="Blevins L.S."/>
            <person name="Allen G.S."/>
            <person name="Johnson M.D."/>
        </authorList>
    </citation>
    <scope>FUNCTION</scope>
    <scope>TISSUE SPECIFICITY</scope>
</reference>
<gene>
    <name type="primary">CPZ</name>
</gene>
<dbReference type="EC" id="3.4.17.-"/>
<dbReference type="EMBL" id="U83411">
    <property type="protein sequence ID" value="AAB58911.1"/>
    <property type="molecule type" value="mRNA"/>
</dbReference>
<dbReference type="EMBL" id="AK056317">
    <property type="protein sequence ID" value="BAB71147.1"/>
    <property type="status" value="ALT_FRAME"/>
    <property type="molecule type" value="mRNA"/>
</dbReference>
<dbReference type="EMBL" id="AC105345">
    <property type="status" value="NOT_ANNOTATED_CDS"/>
    <property type="molecule type" value="Genomic_DNA"/>
</dbReference>
<dbReference type="EMBL" id="BC006393">
    <property type="status" value="NOT_ANNOTATED_CDS"/>
    <property type="molecule type" value="mRNA"/>
</dbReference>
<dbReference type="EMBL" id="BC080539">
    <property type="protein sequence ID" value="AAH80539.1"/>
    <property type="molecule type" value="mRNA"/>
</dbReference>
<dbReference type="CCDS" id="CCDS33953.1">
    <molecule id="Q66K79-1"/>
</dbReference>
<dbReference type="CCDS" id="CCDS3404.1">
    <molecule id="Q66K79-2"/>
</dbReference>
<dbReference type="CCDS" id="CCDS43212.1">
    <molecule id="Q66K79-3"/>
</dbReference>
<dbReference type="RefSeq" id="NP_001014447.2">
    <molecule id="Q66K79-1"/>
    <property type="nucleotide sequence ID" value="NM_001014447.3"/>
</dbReference>
<dbReference type="RefSeq" id="NP_001014448.2">
    <molecule id="Q66K79-3"/>
    <property type="nucleotide sequence ID" value="NM_001014448.3"/>
</dbReference>
<dbReference type="RefSeq" id="NP_003643.3">
    <molecule id="Q66K79-2"/>
    <property type="nucleotide sequence ID" value="NM_003652.4"/>
</dbReference>
<dbReference type="SMR" id="Q66K79"/>
<dbReference type="BioGRID" id="114102">
    <property type="interactions" value="23"/>
</dbReference>
<dbReference type="FunCoup" id="Q66K79">
    <property type="interactions" value="164"/>
</dbReference>
<dbReference type="IntAct" id="Q66K79">
    <property type="interactions" value="4"/>
</dbReference>
<dbReference type="STRING" id="9606.ENSP00000354255"/>
<dbReference type="MEROPS" id="M14.012"/>
<dbReference type="GlyCosmos" id="Q66K79">
    <property type="glycosylation" value="1 site, No reported glycans"/>
</dbReference>
<dbReference type="GlyGen" id="Q66K79">
    <property type="glycosylation" value="2 sites"/>
</dbReference>
<dbReference type="iPTMnet" id="Q66K79"/>
<dbReference type="PhosphoSitePlus" id="Q66K79"/>
<dbReference type="BioMuta" id="CPZ"/>
<dbReference type="DMDM" id="296434423"/>
<dbReference type="jPOST" id="Q66K79"/>
<dbReference type="MassIVE" id="Q66K79"/>
<dbReference type="PaxDb" id="9606-ENSP00000354255"/>
<dbReference type="PeptideAtlas" id="Q66K79"/>
<dbReference type="ProteomicsDB" id="65958">
    <molecule id="Q66K79-1"/>
</dbReference>
<dbReference type="ProteomicsDB" id="65959">
    <molecule id="Q66K79-2"/>
</dbReference>
<dbReference type="ProteomicsDB" id="65960">
    <molecule id="Q66K79-3"/>
</dbReference>
<dbReference type="Antibodypedia" id="22804">
    <property type="antibodies" value="66 antibodies from 23 providers"/>
</dbReference>
<dbReference type="DNASU" id="8532"/>
<dbReference type="Ensembl" id="ENST00000315782.6">
    <molecule id="Q66K79-2"/>
    <property type="protein sequence ID" value="ENSP00000315074.6"/>
    <property type="gene ID" value="ENSG00000109625.19"/>
</dbReference>
<dbReference type="Ensembl" id="ENST00000360986.9">
    <molecule id="Q66K79-1"/>
    <property type="protein sequence ID" value="ENSP00000354255.4"/>
    <property type="gene ID" value="ENSG00000109625.19"/>
</dbReference>
<dbReference type="Ensembl" id="ENST00000382480.6">
    <molecule id="Q66K79-3"/>
    <property type="protein sequence ID" value="ENSP00000371920.2"/>
    <property type="gene ID" value="ENSG00000109625.19"/>
</dbReference>
<dbReference type="GeneID" id="8532"/>
<dbReference type="KEGG" id="hsa:8532"/>
<dbReference type="MANE-Select" id="ENST00000360986.9">
    <property type="protein sequence ID" value="ENSP00000354255.4"/>
    <property type="RefSeq nucleotide sequence ID" value="NM_001014447.3"/>
    <property type="RefSeq protein sequence ID" value="NP_001014447.2"/>
</dbReference>
<dbReference type="UCSC" id="uc003glm.4">
    <molecule id="Q66K79-1"/>
    <property type="organism name" value="human"/>
</dbReference>
<dbReference type="AGR" id="HGNC:2333"/>
<dbReference type="CTD" id="8532"/>
<dbReference type="DisGeNET" id="8532"/>
<dbReference type="GeneCards" id="CPZ"/>
<dbReference type="HGNC" id="HGNC:2333">
    <property type="gene designation" value="CPZ"/>
</dbReference>
<dbReference type="HPA" id="ENSG00000109625">
    <property type="expression patterns" value="Tissue enhanced (ovary)"/>
</dbReference>
<dbReference type="MalaCards" id="CPZ"/>
<dbReference type="MIM" id="603105">
    <property type="type" value="gene"/>
</dbReference>
<dbReference type="neXtProt" id="NX_Q66K79"/>
<dbReference type="OpenTargets" id="ENSG00000109625"/>
<dbReference type="PharmGKB" id="PA26854"/>
<dbReference type="VEuPathDB" id="HostDB:ENSG00000109625"/>
<dbReference type="eggNOG" id="KOG2649">
    <property type="taxonomic scope" value="Eukaryota"/>
</dbReference>
<dbReference type="GeneTree" id="ENSGT00940000156391"/>
<dbReference type="HOGENOM" id="CLU_006722_5_1_1"/>
<dbReference type="InParanoid" id="Q66K79"/>
<dbReference type="OMA" id="DCGRYFA"/>
<dbReference type="OrthoDB" id="10249045at2759"/>
<dbReference type="PAN-GO" id="Q66K79">
    <property type="GO annotations" value="4 GO annotations based on evolutionary models"/>
</dbReference>
<dbReference type="PhylomeDB" id="Q66K79"/>
<dbReference type="TreeFam" id="TF315592"/>
<dbReference type="PathwayCommons" id="Q66K79"/>
<dbReference type="SignaLink" id="Q66K79"/>
<dbReference type="BioGRID-ORCS" id="8532">
    <property type="hits" value="12 hits in 1144 CRISPR screens"/>
</dbReference>
<dbReference type="GeneWiki" id="CPZ_(gene)"/>
<dbReference type="GenomeRNAi" id="8532"/>
<dbReference type="Pharos" id="Q66K79">
    <property type="development level" value="Tbio"/>
</dbReference>
<dbReference type="PRO" id="PR:Q66K79"/>
<dbReference type="Proteomes" id="UP000005640">
    <property type="component" value="Chromosome 4"/>
</dbReference>
<dbReference type="RNAct" id="Q66K79">
    <property type="molecule type" value="protein"/>
</dbReference>
<dbReference type="Bgee" id="ENSG00000109625">
    <property type="expression patterns" value="Expressed in left ovary and 99 other cell types or tissues"/>
</dbReference>
<dbReference type="ExpressionAtlas" id="Q66K79">
    <property type="expression patterns" value="baseline and differential"/>
</dbReference>
<dbReference type="GO" id="GO:0005615">
    <property type="term" value="C:extracellular space"/>
    <property type="evidence" value="ECO:0000318"/>
    <property type="project" value="GO_Central"/>
</dbReference>
<dbReference type="GO" id="GO:0004181">
    <property type="term" value="F:metallocarboxypeptidase activity"/>
    <property type="evidence" value="ECO:0000318"/>
    <property type="project" value="GO_Central"/>
</dbReference>
<dbReference type="GO" id="GO:0008270">
    <property type="term" value="F:zinc ion binding"/>
    <property type="evidence" value="ECO:0007669"/>
    <property type="project" value="InterPro"/>
</dbReference>
<dbReference type="GO" id="GO:0006518">
    <property type="term" value="P:peptide metabolic process"/>
    <property type="evidence" value="ECO:0000318"/>
    <property type="project" value="GO_Central"/>
</dbReference>
<dbReference type="GO" id="GO:0016485">
    <property type="term" value="P:protein processing"/>
    <property type="evidence" value="ECO:0000318"/>
    <property type="project" value="GO_Central"/>
</dbReference>
<dbReference type="GO" id="GO:0006508">
    <property type="term" value="P:proteolysis"/>
    <property type="evidence" value="ECO:0000304"/>
    <property type="project" value="ProtInc"/>
</dbReference>
<dbReference type="GO" id="GO:0016055">
    <property type="term" value="P:Wnt signaling pathway"/>
    <property type="evidence" value="ECO:0007669"/>
    <property type="project" value="UniProtKB-KW"/>
</dbReference>
<dbReference type="CDD" id="cd07447">
    <property type="entry name" value="CRD_Carboxypeptidase_Z"/>
    <property type="match status" value="1"/>
</dbReference>
<dbReference type="CDD" id="cd03867">
    <property type="entry name" value="M14_CPZ"/>
    <property type="match status" value="1"/>
</dbReference>
<dbReference type="CDD" id="cd11308">
    <property type="entry name" value="Peptidase_M14NE-CP-C_like"/>
    <property type="match status" value="1"/>
</dbReference>
<dbReference type="FunFam" id="1.10.2000.10:FF:000012">
    <property type="entry name" value="Carboxypeptidase Z"/>
    <property type="match status" value="1"/>
</dbReference>
<dbReference type="FunFam" id="2.60.40.1120:FF:000010">
    <property type="entry name" value="Carboxypeptidase Z"/>
    <property type="match status" value="1"/>
</dbReference>
<dbReference type="FunFam" id="3.40.630.10:FF:000022">
    <property type="entry name" value="Carboxypeptidase Z"/>
    <property type="match status" value="1"/>
</dbReference>
<dbReference type="Gene3D" id="2.60.40.1120">
    <property type="entry name" value="Carboxypeptidase-like, regulatory domain"/>
    <property type="match status" value="1"/>
</dbReference>
<dbReference type="Gene3D" id="1.10.2000.10">
    <property type="entry name" value="Frizzled cysteine-rich domain"/>
    <property type="match status" value="1"/>
</dbReference>
<dbReference type="Gene3D" id="3.40.630.10">
    <property type="entry name" value="Zn peptidases"/>
    <property type="match status" value="1"/>
</dbReference>
<dbReference type="InterPro" id="IPR008969">
    <property type="entry name" value="CarboxyPept-like_regulatory"/>
</dbReference>
<dbReference type="InterPro" id="IPR020067">
    <property type="entry name" value="Frizzled_dom"/>
</dbReference>
<dbReference type="InterPro" id="IPR036790">
    <property type="entry name" value="Frizzled_dom_sf"/>
</dbReference>
<dbReference type="InterPro" id="IPR034239">
    <property type="entry name" value="M14_CPZ_CPD"/>
</dbReference>
<dbReference type="InterPro" id="IPR000834">
    <property type="entry name" value="Peptidase_M14"/>
</dbReference>
<dbReference type="InterPro" id="IPR050753">
    <property type="entry name" value="Peptidase_M14_domain"/>
</dbReference>
<dbReference type="PANTHER" id="PTHR11532:SF63">
    <property type="entry name" value="CARBOXYPEPTIDASE Z"/>
    <property type="match status" value="1"/>
</dbReference>
<dbReference type="PANTHER" id="PTHR11532">
    <property type="entry name" value="PROTEASE M14 CARBOXYPEPTIDASE"/>
    <property type="match status" value="1"/>
</dbReference>
<dbReference type="Pfam" id="PF13620">
    <property type="entry name" value="CarboxypepD_reg"/>
    <property type="match status" value="1"/>
</dbReference>
<dbReference type="Pfam" id="PF01392">
    <property type="entry name" value="Fz"/>
    <property type="match status" value="1"/>
</dbReference>
<dbReference type="Pfam" id="PF00246">
    <property type="entry name" value="Peptidase_M14"/>
    <property type="match status" value="1"/>
</dbReference>
<dbReference type="PRINTS" id="PR00765">
    <property type="entry name" value="CRBOXYPTASEA"/>
</dbReference>
<dbReference type="SMART" id="SM00063">
    <property type="entry name" value="FRI"/>
    <property type="match status" value="1"/>
</dbReference>
<dbReference type="SMART" id="SM00631">
    <property type="entry name" value="Zn_pept"/>
    <property type="match status" value="1"/>
</dbReference>
<dbReference type="SUPFAM" id="SSF49464">
    <property type="entry name" value="Carboxypeptidase regulatory domain-like"/>
    <property type="match status" value="1"/>
</dbReference>
<dbReference type="SUPFAM" id="SSF63501">
    <property type="entry name" value="Frizzled cysteine-rich domain"/>
    <property type="match status" value="1"/>
</dbReference>
<dbReference type="SUPFAM" id="SSF53187">
    <property type="entry name" value="Zn-dependent exopeptidases"/>
    <property type="match status" value="1"/>
</dbReference>
<dbReference type="PROSITE" id="PS00133">
    <property type="entry name" value="CARBOXYPEPT_ZN_2"/>
    <property type="match status" value="1"/>
</dbReference>
<dbReference type="PROSITE" id="PS50038">
    <property type="entry name" value="FZ"/>
    <property type="match status" value="1"/>
</dbReference>
<dbReference type="PROSITE" id="PS52035">
    <property type="entry name" value="PEPTIDASE_M14"/>
    <property type="match status" value="1"/>
</dbReference>
<keyword id="KW-0025">Alternative splicing</keyword>
<keyword id="KW-0121">Carboxypeptidase</keyword>
<keyword id="KW-1015">Disulfide bond</keyword>
<keyword id="KW-0272">Extracellular matrix</keyword>
<keyword id="KW-0325">Glycoprotein</keyword>
<keyword id="KW-0378">Hydrolase</keyword>
<keyword id="KW-0479">Metal-binding</keyword>
<keyword id="KW-0482">Metalloprotease</keyword>
<keyword id="KW-0645">Protease</keyword>
<keyword id="KW-1267">Proteomics identification</keyword>
<keyword id="KW-1185">Reference proteome</keyword>
<keyword id="KW-0964">Secreted</keyword>
<keyword id="KW-0732">Signal</keyword>
<keyword id="KW-0879">Wnt signaling pathway</keyword>
<keyword id="KW-0862">Zinc</keyword>
<sequence>MPPPLPLLLLTVLVVAAARPGCEFERNPAGECHRPPAADSATCVDLQLRTCSDAAYNHTTFPNLLQHRSWEVVEASSEYILLSVLHQLLEGQCNPDLRLLGCAVLAPRCEGGWVRRPCRHICEGLREVCQPAFDAIDMAWPYFLDCHRYFTREDEGCYDPLEKLRGGLEADEALPSGLPPTFIRFSHHSYAQMVRVLRRTASRCAHVARTYSIGRSFDGRELLVIEFSSRPGQHELMEPEVKLIGNIHGNEVAGREMLIYLAQYLCSEYLLGNPRIQRLLNTTRIHLLPSMNPDGYEVAAAEGAGYNGWTSGRQNAQNLDLNRNFPDLTSEYYRLAETRGARSDHIPIPQHYWWGKVAPETKAIMKWMQTIPFVLSASLHGGDLVVSYPFDFSKHPQEEKMFSPTPDEKMFKLLSRAYADVHPMMMDRSENRCGGNFLKRGSIINGADWYSFTGGMSDFNYLHTNCFEITVELGCVKFPPEEALYILWQHNKESLLNFVETVHRGIKGVVTDKFGKPVKNARISVKGIRHDITTAPDGDYWRLLPPGIHIVIAQAPGYAKVIKKVIIPARMKRAGRVDFILQPLGMGPKNFIHGLRRTGPHDPLGGASSLGEATEPDPLRARRQPSADGSKPWWWSYFTSLSTHRPRWLLKY</sequence>
<accession>Q66K79</accession>
<accession>O00520</accession>
<accession>Q96MX2</accession>
<evidence type="ECO:0000250" key="1"/>
<evidence type="ECO:0000250" key="2">
    <source>
        <dbReference type="UniProtKB" id="P00730"/>
    </source>
</evidence>
<evidence type="ECO:0000255" key="3"/>
<evidence type="ECO:0000255" key="4">
    <source>
        <dbReference type="PROSITE-ProRule" id="PRU00090"/>
    </source>
</evidence>
<evidence type="ECO:0000255" key="5">
    <source>
        <dbReference type="PROSITE-ProRule" id="PRU01379"/>
    </source>
</evidence>
<evidence type="ECO:0000256" key="6">
    <source>
        <dbReference type="SAM" id="MobiDB-lite"/>
    </source>
</evidence>
<evidence type="ECO:0000269" key="7">
    <source>
    </source>
</evidence>
<evidence type="ECO:0000269" key="8">
    <source>
    </source>
</evidence>
<evidence type="ECO:0000269" key="9">
    <source>
    </source>
</evidence>
<evidence type="ECO:0000269" key="10">
    <source>
    </source>
</evidence>
<evidence type="ECO:0000269" key="11">
    <source>
    </source>
</evidence>
<evidence type="ECO:0000269" key="12">
    <source>
    </source>
</evidence>
<evidence type="ECO:0000303" key="13">
    <source>
    </source>
</evidence>
<evidence type="ECO:0000303" key="14">
    <source>
    </source>
</evidence>
<evidence type="ECO:0000305" key="15"/>
<proteinExistence type="evidence at protein level"/>
<protein>
    <recommendedName>
        <fullName>Carboxypeptidase Z</fullName>
        <shortName>CPZ</shortName>
        <ecNumber>3.4.17.-</ecNumber>
    </recommendedName>
</protein>